<dbReference type="EC" id="6.1.1.10" evidence="1"/>
<dbReference type="EMBL" id="CP000857">
    <property type="protein sequence ID" value="ACN45700.1"/>
    <property type="molecule type" value="Genomic_DNA"/>
</dbReference>
<dbReference type="RefSeq" id="WP_000195341.1">
    <property type="nucleotide sequence ID" value="NC_012125.1"/>
</dbReference>
<dbReference type="SMR" id="C0Q0Y1"/>
<dbReference type="KEGG" id="sei:SPC_1548"/>
<dbReference type="HOGENOM" id="CLU_009710_7_0_6"/>
<dbReference type="Proteomes" id="UP000001599">
    <property type="component" value="Chromosome"/>
</dbReference>
<dbReference type="GO" id="GO:0005829">
    <property type="term" value="C:cytosol"/>
    <property type="evidence" value="ECO:0007669"/>
    <property type="project" value="TreeGrafter"/>
</dbReference>
<dbReference type="GO" id="GO:0005524">
    <property type="term" value="F:ATP binding"/>
    <property type="evidence" value="ECO:0007669"/>
    <property type="project" value="UniProtKB-UniRule"/>
</dbReference>
<dbReference type="GO" id="GO:0046872">
    <property type="term" value="F:metal ion binding"/>
    <property type="evidence" value="ECO:0007669"/>
    <property type="project" value="UniProtKB-KW"/>
</dbReference>
<dbReference type="GO" id="GO:0004825">
    <property type="term" value="F:methionine-tRNA ligase activity"/>
    <property type="evidence" value="ECO:0007669"/>
    <property type="project" value="UniProtKB-UniRule"/>
</dbReference>
<dbReference type="GO" id="GO:0000049">
    <property type="term" value="F:tRNA binding"/>
    <property type="evidence" value="ECO:0007669"/>
    <property type="project" value="UniProtKB-KW"/>
</dbReference>
<dbReference type="GO" id="GO:0006431">
    <property type="term" value="P:methionyl-tRNA aminoacylation"/>
    <property type="evidence" value="ECO:0007669"/>
    <property type="project" value="UniProtKB-UniRule"/>
</dbReference>
<dbReference type="CDD" id="cd07957">
    <property type="entry name" value="Anticodon_Ia_Met"/>
    <property type="match status" value="1"/>
</dbReference>
<dbReference type="CDD" id="cd00814">
    <property type="entry name" value="MetRS_core"/>
    <property type="match status" value="1"/>
</dbReference>
<dbReference type="CDD" id="cd02800">
    <property type="entry name" value="tRNA_bind_EcMetRS_like"/>
    <property type="match status" value="1"/>
</dbReference>
<dbReference type="FunFam" id="1.10.730.10:FF:000005">
    <property type="entry name" value="Methionine--tRNA ligase"/>
    <property type="match status" value="1"/>
</dbReference>
<dbReference type="FunFam" id="2.20.28.20:FF:000001">
    <property type="entry name" value="Methionine--tRNA ligase"/>
    <property type="match status" value="1"/>
</dbReference>
<dbReference type="FunFam" id="2.40.50.140:FF:000042">
    <property type="entry name" value="Methionine--tRNA ligase"/>
    <property type="match status" value="1"/>
</dbReference>
<dbReference type="Gene3D" id="3.40.50.620">
    <property type="entry name" value="HUPs"/>
    <property type="match status" value="1"/>
</dbReference>
<dbReference type="Gene3D" id="1.10.730.10">
    <property type="entry name" value="Isoleucyl-tRNA Synthetase, Domain 1"/>
    <property type="match status" value="1"/>
</dbReference>
<dbReference type="Gene3D" id="2.20.28.20">
    <property type="entry name" value="Methionyl-tRNA synthetase, Zn-domain"/>
    <property type="match status" value="1"/>
</dbReference>
<dbReference type="Gene3D" id="2.40.50.140">
    <property type="entry name" value="Nucleic acid-binding proteins"/>
    <property type="match status" value="1"/>
</dbReference>
<dbReference type="HAMAP" id="MF_00098">
    <property type="entry name" value="Met_tRNA_synth_type1"/>
    <property type="match status" value="1"/>
</dbReference>
<dbReference type="InterPro" id="IPR001412">
    <property type="entry name" value="aa-tRNA-synth_I_CS"/>
</dbReference>
<dbReference type="InterPro" id="IPR041872">
    <property type="entry name" value="Anticodon_Met"/>
</dbReference>
<dbReference type="InterPro" id="IPR004495">
    <property type="entry name" value="Met-tRNA-synth_bsu_C"/>
</dbReference>
<dbReference type="InterPro" id="IPR023458">
    <property type="entry name" value="Met-tRNA_ligase_1"/>
</dbReference>
<dbReference type="InterPro" id="IPR014758">
    <property type="entry name" value="Met-tRNA_synth"/>
</dbReference>
<dbReference type="InterPro" id="IPR015413">
    <property type="entry name" value="Methionyl/Leucyl_tRNA_Synth"/>
</dbReference>
<dbReference type="InterPro" id="IPR033911">
    <property type="entry name" value="MetRS_core"/>
</dbReference>
<dbReference type="InterPro" id="IPR029038">
    <property type="entry name" value="MetRS_Zn"/>
</dbReference>
<dbReference type="InterPro" id="IPR012340">
    <property type="entry name" value="NA-bd_OB-fold"/>
</dbReference>
<dbReference type="InterPro" id="IPR014729">
    <property type="entry name" value="Rossmann-like_a/b/a_fold"/>
</dbReference>
<dbReference type="InterPro" id="IPR002547">
    <property type="entry name" value="tRNA-bd_dom"/>
</dbReference>
<dbReference type="InterPro" id="IPR009080">
    <property type="entry name" value="tRNAsynth_Ia_anticodon-bd"/>
</dbReference>
<dbReference type="NCBIfam" id="TIGR00398">
    <property type="entry name" value="metG"/>
    <property type="match status" value="1"/>
</dbReference>
<dbReference type="NCBIfam" id="TIGR00399">
    <property type="entry name" value="metG_C_term"/>
    <property type="match status" value="1"/>
</dbReference>
<dbReference type="NCBIfam" id="NF001100">
    <property type="entry name" value="PRK00133.1"/>
    <property type="match status" value="1"/>
</dbReference>
<dbReference type="PANTHER" id="PTHR45765">
    <property type="entry name" value="METHIONINE--TRNA LIGASE"/>
    <property type="match status" value="1"/>
</dbReference>
<dbReference type="PANTHER" id="PTHR45765:SF1">
    <property type="entry name" value="METHIONINE--TRNA LIGASE, CYTOPLASMIC"/>
    <property type="match status" value="1"/>
</dbReference>
<dbReference type="Pfam" id="PF19303">
    <property type="entry name" value="Anticodon_3"/>
    <property type="match status" value="1"/>
</dbReference>
<dbReference type="Pfam" id="PF09334">
    <property type="entry name" value="tRNA-synt_1g"/>
    <property type="match status" value="1"/>
</dbReference>
<dbReference type="Pfam" id="PF01588">
    <property type="entry name" value="tRNA_bind"/>
    <property type="match status" value="1"/>
</dbReference>
<dbReference type="PRINTS" id="PR01041">
    <property type="entry name" value="TRNASYNTHMET"/>
</dbReference>
<dbReference type="SUPFAM" id="SSF47323">
    <property type="entry name" value="Anticodon-binding domain of a subclass of class I aminoacyl-tRNA synthetases"/>
    <property type="match status" value="1"/>
</dbReference>
<dbReference type="SUPFAM" id="SSF57770">
    <property type="entry name" value="Methionyl-tRNA synthetase (MetRS), Zn-domain"/>
    <property type="match status" value="1"/>
</dbReference>
<dbReference type="SUPFAM" id="SSF50249">
    <property type="entry name" value="Nucleic acid-binding proteins"/>
    <property type="match status" value="1"/>
</dbReference>
<dbReference type="SUPFAM" id="SSF52374">
    <property type="entry name" value="Nucleotidylyl transferase"/>
    <property type="match status" value="1"/>
</dbReference>
<dbReference type="PROSITE" id="PS00178">
    <property type="entry name" value="AA_TRNA_LIGASE_I"/>
    <property type="match status" value="1"/>
</dbReference>
<dbReference type="PROSITE" id="PS50886">
    <property type="entry name" value="TRBD"/>
    <property type="match status" value="1"/>
</dbReference>
<organism>
    <name type="scientific">Salmonella paratyphi C (strain RKS4594)</name>
    <dbReference type="NCBI Taxonomy" id="476213"/>
    <lineage>
        <taxon>Bacteria</taxon>
        <taxon>Pseudomonadati</taxon>
        <taxon>Pseudomonadota</taxon>
        <taxon>Gammaproteobacteria</taxon>
        <taxon>Enterobacterales</taxon>
        <taxon>Enterobacteriaceae</taxon>
        <taxon>Salmonella</taxon>
    </lineage>
</organism>
<reference key="1">
    <citation type="journal article" date="2009" name="PLoS ONE">
        <title>Salmonella paratyphi C: genetic divergence from Salmonella choleraesuis and pathogenic convergence with Salmonella typhi.</title>
        <authorList>
            <person name="Liu W.-Q."/>
            <person name="Feng Y."/>
            <person name="Wang Y."/>
            <person name="Zou Q.-H."/>
            <person name="Chen F."/>
            <person name="Guo J.-T."/>
            <person name="Peng Y.-H."/>
            <person name="Jin Y."/>
            <person name="Li Y.-G."/>
            <person name="Hu S.-N."/>
            <person name="Johnston R.N."/>
            <person name="Liu G.-R."/>
            <person name="Liu S.-L."/>
        </authorList>
    </citation>
    <scope>NUCLEOTIDE SEQUENCE [LARGE SCALE GENOMIC DNA]</scope>
    <source>
        <strain>RKS4594</strain>
    </source>
</reference>
<sequence>MTQVAKKILVTCALPYANGSIHLGHMLEHIQADVWVRYQRMRGHEVNFICADDAHGTPIMLKAQQLGITPEQMIGEMSQEHQTDFAGFNISYDNYHSTHSDENRELSELIYTRLKENGFIKNRTISQLYDPEKGMFLPDRFVKGTCPKCKSADQYGDNCEVCGATYSPTELIEPKSVVSGATPVMRDSEHFFFDLPSFSEMLQAWTRSGALQEQVANKMQEWFESGLQQWDISRDAPYFGFEIPNAPGKYFYVWLDAPIGYMGSFKNLCDKRGDTTSFDEYWKKDSDAELYHFIGKDIVYFHSLFWPAMLEGSHFRKPTNLFVHGYVTVNGAKMSKSRGTFIKASTWLKHFDADSLRYYYTAKLSSRIDDIDLNLEDFVQRVNADIVNKVVNLASRNAGFINKRFDGVLAAELADPQLYKTFTDAAAVIGEAWESREFGKAIREIMALADVANRYVDEQAPWVVAKQEGRDADLQAICSMGINLFRVLMTYLKPVLPTLSERVEAFLNSELNWDAIEQPLLSHKVNTFKALYNRIDMKQVEALVEASKEEVKAAAAPVTGPLADFPIQETITFDDFAKIDLRVALIENAEFVEGSDKLLRLTLDLGGEKRNVFSGIRSSYPDPQALIGRQTVMVANLAPRKMRFGVSEGMVMAAGPGGKDIFLLSPDDGAKPGQQVK</sequence>
<feature type="chain" id="PRO_1000118738" description="Methionine--tRNA ligase">
    <location>
        <begin position="1"/>
        <end position="677"/>
    </location>
</feature>
<feature type="domain" description="tRNA-binding" evidence="1">
    <location>
        <begin position="575"/>
        <end position="677"/>
    </location>
</feature>
<feature type="short sequence motif" description="'HIGH' region">
    <location>
        <begin position="15"/>
        <end position="25"/>
    </location>
</feature>
<feature type="short sequence motif" description="'KMSKS' region">
    <location>
        <begin position="333"/>
        <end position="337"/>
    </location>
</feature>
<feature type="binding site" evidence="1">
    <location>
        <position position="146"/>
    </location>
    <ligand>
        <name>Zn(2+)</name>
        <dbReference type="ChEBI" id="CHEBI:29105"/>
    </ligand>
</feature>
<feature type="binding site" evidence="1">
    <location>
        <position position="149"/>
    </location>
    <ligand>
        <name>Zn(2+)</name>
        <dbReference type="ChEBI" id="CHEBI:29105"/>
    </ligand>
</feature>
<feature type="binding site" evidence="1">
    <location>
        <position position="159"/>
    </location>
    <ligand>
        <name>Zn(2+)</name>
        <dbReference type="ChEBI" id="CHEBI:29105"/>
    </ligand>
</feature>
<feature type="binding site" evidence="1">
    <location>
        <position position="162"/>
    </location>
    <ligand>
        <name>Zn(2+)</name>
        <dbReference type="ChEBI" id="CHEBI:29105"/>
    </ligand>
</feature>
<feature type="binding site" evidence="1">
    <location>
        <position position="336"/>
    </location>
    <ligand>
        <name>ATP</name>
        <dbReference type="ChEBI" id="CHEBI:30616"/>
    </ligand>
</feature>
<keyword id="KW-0030">Aminoacyl-tRNA synthetase</keyword>
<keyword id="KW-0067">ATP-binding</keyword>
<keyword id="KW-0963">Cytoplasm</keyword>
<keyword id="KW-0436">Ligase</keyword>
<keyword id="KW-0479">Metal-binding</keyword>
<keyword id="KW-0547">Nucleotide-binding</keyword>
<keyword id="KW-0648">Protein biosynthesis</keyword>
<keyword id="KW-0694">RNA-binding</keyword>
<keyword id="KW-0820">tRNA-binding</keyword>
<keyword id="KW-0862">Zinc</keyword>
<comment type="function">
    <text evidence="1">Is required not only for elongation of protein synthesis but also for the initiation of all mRNA translation through initiator tRNA(fMet) aminoacylation.</text>
</comment>
<comment type="catalytic activity">
    <reaction evidence="1">
        <text>tRNA(Met) + L-methionine + ATP = L-methionyl-tRNA(Met) + AMP + diphosphate</text>
        <dbReference type="Rhea" id="RHEA:13481"/>
        <dbReference type="Rhea" id="RHEA-COMP:9667"/>
        <dbReference type="Rhea" id="RHEA-COMP:9698"/>
        <dbReference type="ChEBI" id="CHEBI:30616"/>
        <dbReference type="ChEBI" id="CHEBI:33019"/>
        <dbReference type="ChEBI" id="CHEBI:57844"/>
        <dbReference type="ChEBI" id="CHEBI:78442"/>
        <dbReference type="ChEBI" id="CHEBI:78530"/>
        <dbReference type="ChEBI" id="CHEBI:456215"/>
        <dbReference type="EC" id="6.1.1.10"/>
    </reaction>
</comment>
<comment type="cofactor">
    <cofactor evidence="1">
        <name>Zn(2+)</name>
        <dbReference type="ChEBI" id="CHEBI:29105"/>
    </cofactor>
    <text evidence="1">Binds 1 zinc ion per subunit.</text>
</comment>
<comment type="subunit">
    <text evidence="1">Homodimer.</text>
</comment>
<comment type="subcellular location">
    <subcellularLocation>
        <location evidence="1">Cytoplasm</location>
    </subcellularLocation>
</comment>
<comment type="similarity">
    <text evidence="1">Belongs to the class-I aminoacyl-tRNA synthetase family. MetG type 1 subfamily.</text>
</comment>
<name>SYM_SALPC</name>
<proteinExistence type="inferred from homology"/>
<accession>C0Q0Y1</accession>
<gene>
    <name evidence="1" type="primary">metG</name>
    <name type="ordered locus">SPC_1548</name>
</gene>
<protein>
    <recommendedName>
        <fullName evidence="1">Methionine--tRNA ligase</fullName>
        <ecNumber evidence="1">6.1.1.10</ecNumber>
    </recommendedName>
    <alternativeName>
        <fullName evidence="1">Methionyl-tRNA synthetase</fullName>
        <shortName evidence="1">MetRS</shortName>
    </alternativeName>
</protein>
<evidence type="ECO:0000255" key="1">
    <source>
        <dbReference type="HAMAP-Rule" id="MF_00098"/>
    </source>
</evidence>